<keyword id="KW-0002">3D-structure</keyword>
<keyword id="KW-0007">Acetylation</keyword>
<keyword id="KW-0963">Cytoplasm</keyword>
<keyword id="KW-0256">Endoplasmic reticulum</keyword>
<keyword id="KW-0472">Membrane</keyword>
<keyword id="KW-1185">Reference proteome</keyword>
<keyword id="KW-0812">Transmembrane</keyword>
<keyword id="KW-1133">Transmembrane helix</keyword>
<gene>
    <name evidence="1" type="primary">TMEM258</name>
</gene>
<reference key="1">
    <citation type="journal article" date="2005" name="Nature">
        <title>Genome sequence, comparative analysis and haplotype structure of the domestic dog.</title>
        <authorList>
            <person name="Lindblad-Toh K."/>
            <person name="Wade C.M."/>
            <person name="Mikkelsen T.S."/>
            <person name="Karlsson E.K."/>
            <person name="Jaffe D.B."/>
            <person name="Kamal M."/>
            <person name="Clamp M."/>
            <person name="Chang J.L."/>
            <person name="Kulbokas E.J. III"/>
            <person name="Zody M.C."/>
            <person name="Mauceli E."/>
            <person name="Xie X."/>
            <person name="Breen M."/>
            <person name="Wayne R.K."/>
            <person name="Ostrander E.A."/>
            <person name="Ponting C.P."/>
            <person name="Galibert F."/>
            <person name="Smith D.R."/>
            <person name="deJong P.J."/>
            <person name="Kirkness E.F."/>
            <person name="Alvarez P."/>
            <person name="Biagi T."/>
            <person name="Brockman W."/>
            <person name="Butler J."/>
            <person name="Chin C.-W."/>
            <person name="Cook A."/>
            <person name="Cuff J."/>
            <person name="Daly M.J."/>
            <person name="DeCaprio D."/>
            <person name="Gnerre S."/>
            <person name="Grabherr M."/>
            <person name="Kellis M."/>
            <person name="Kleber M."/>
            <person name="Bardeleben C."/>
            <person name="Goodstadt L."/>
            <person name="Heger A."/>
            <person name="Hitte C."/>
            <person name="Kim L."/>
            <person name="Koepfli K.-P."/>
            <person name="Parker H.G."/>
            <person name="Pollinger J.P."/>
            <person name="Searle S.M.J."/>
            <person name="Sutter N.B."/>
            <person name="Thomas R."/>
            <person name="Webber C."/>
            <person name="Baldwin J."/>
            <person name="Abebe A."/>
            <person name="Abouelleil A."/>
            <person name="Aftuck L."/>
            <person name="Ait-Zahra M."/>
            <person name="Aldredge T."/>
            <person name="Allen N."/>
            <person name="An P."/>
            <person name="Anderson S."/>
            <person name="Antoine C."/>
            <person name="Arachchi H."/>
            <person name="Aslam A."/>
            <person name="Ayotte L."/>
            <person name="Bachantsang P."/>
            <person name="Barry A."/>
            <person name="Bayul T."/>
            <person name="Benamara M."/>
            <person name="Berlin A."/>
            <person name="Bessette D."/>
            <person name="Blitshteyn B."/>
            <person name="Bloom T."/>
            <person name="Blye J."/>
            <person name="Boguslavskiy L."/>
            <person name="Bonnet C."/>
            <person name="Boukhgalter B."/>
            <person name="Brown A."/>
            <person name="Cahill P."/>
            <person name="Calixte N."/>
            <person name="Camarata J."/>
            <person name="Cheshatsang Y."/>
            <person name="Chu J."/>
            <person name="Citroen M."/>
            <person name="Collymore A."/>
            <person name="Cooke P."/>
            <person name="Dawoe T."/>
            <person name="Daza R."/>
            <person name="Decktor K."/>
            <person name="DeGray S."/>
            <person name="Dhargay N."/>
            <person name="Dooley K."/>
            <person name="Dooley K."/>
            <person name="Dorje P."/>
            <person name="Dorjee K."/>
            <person name="Dorris L."/>
            <person name="Duffey N."/>
            <person name="Dupes A."/>
            <person name="Egbiremolen O."/>
            <person name="Elong R."/>
            <person name="Falk J."/>
            <person name="Farina A."/>
            <person name="Faro S."/>
            <person name="Ferguson D."/>
            <person name="Ferreira P."/>
            <person name="Fisher S."/>
            <person name="FitzGerald M."/>
            <person name="Foley K."/>
            <person name="Foley C."/>
            <person name="Franke A."/>
            <person name="Friedrich D."/>
            <person name="Gage D."/>
            <person name="Garber M."/>
            <person name="Gearin G."/>
            <person name="Giannoukos G."/>
            <person name="Goode T."/>
            <person name="Goyette A."/>
            <person name="Graham J."/>
            <person name="Grandbois E."/>
            <person name="Gyaltsen K."/>
            <person name="Hafez N."/>
            <person name="Hagopian D."/>
            <person name="Hagos B."/>
            <person name="Hall J."/>
            <person name="Healy C."/>
            <person name="Hegarty R."/>
            <person name="Honan T."/>
            <person name="Horn A."/>
            <person name="Houde N."/>
            <person name="Hughes L."/>
            <person name="Hunnicutt L."/>
            <person name="Husby M."/>
            <person name="Jester B."/>
            <person name="Jones C."/>
            <person name="Kamat A."/>
            <person name="Kanga B."/>
            <person name="Kells C."/>
            <person name="Khazanovich D."/>
            <person name="Kieu A.C."/>
            <person name="Kisner P."/>
            <person name="Kumar M."/>
            <person name="Lance K."/>
            <person name="Landers T."/>
            <person name="Lara M."/>
            <person name="Lee W."/>
            <person name="Leger J.-P."/>
            <person name="Lennon N."/>
            <person name="Leuper L."/>
            <person name="LeVine S."/>
            <person name="Liu J."/>
            <person name="Liu X."/>
            <person name="Lokyitsang Y."/>
            <person name="Lokyitsang T."/>
            <person name="Lui A."/>
            <person name="Macdonald J."/>
            <person name="Major J."/>
            <person name="Marabella R."/>
            <person name="Maru K."/>
            <person name="Matthews C."/>
            <person name="McDonough S."/>
            <person name="Mehta T."/>
            <person name="Meldrim J."/>
            <person name="Melnikov A."/>
            <person name="Meneus L."/>
            <person name="Mihalev A."/>
            <person name="Mihova T."/>
            <person name="Miller K."/>
            <person name="Mittelman R."/>
            <person name="Mlenga V."/>
            <person name="Mulrain L."/>
            <person name="Munson G."/>
            <person name="Navidi A."/>
            <person name="Naylor J."/>
            <person name="Nguyen T."/>
            <person name="Nguyen N."/>
            <person name="Nguyen C."/>
            <person name="Nguyen T."/>
            <person name="Nicol R."/>
            <person name="Norbu N."/>
            <person name="Norbu C."/>
            <person name="Novod N."/>
            <person name="Nyima T."/>
            <person name="Olandt P."/>
            <person name="O'Neill B."/>
            <person name="O'Neill K."/>
            <person name="Osman S."/>
            <person name="Oyono L."/>
            <person name="Patti C."/>
            <person name="Perrin D."/>
            <person name="Phunkhang P."/>
            <person name="Pierre F."/>
            <person name="Priest M."/>
            <person name="Rachupka A."/>
            <person name="Raghuraman S."/>
            <person name="Rameau R."/>
            <person name="Ray V."/>
            <person name="Raymond C."/>
            <person name="Rege F."/>
            <person name="Rise C."/>
            <person name="Rogers J."/>
            <person name="Rogov P."/>
            <person name="Sahalie J."/>
            <person name="Settipalli S."/>
            <person name="Sharpe T."/>
            <person name="Shea T."/>
            <person name="Sheehan M."/>
            <person name="Sherpa N."/>
            <person name="Shi J."/>
            <person name="Shih D."/>
            <person name="Sloan J."/>
            <person name="Smith C."/>
            <person name="Sparrow T."/>
            <person name="Stalker J."/>
            <person name="Stange-Thomann N."/>
            <person name="Stavropoulos S."/>
            <person name="Stone C."/>
            <person name="Stone S."/>
            <person name="Sykes S."/>
            <person name="Tchuinga P."/>
            <person name="Tenzing P."/>
            <person name="Tesfaye S."/>
            <person name="Thoulutsang D."/>
            <person name="Thoulutsang Y."/>
            <person name="Topham K."/>
            <person name="Topping I."/>
            <person name="Tsamla T."/>
            <person name="Vassiliev H."/>
            <person name="Venkataraman V."/>
            <person name="Vo A."/>
            <person name="Wangchuk T."/>
            <person name="Wangdi T."/>
            <person name="Weiand M."/>
            <person name="Wilkinson J."/>
            <person name="Wilson A."/>
            <person name="Yadav S."/>
            <person name="Yang S."/>
            <person name="Yang X."/>
            <person name="Young G."/>
            <person name="Yu Q."/>
            <person name="Zainoun J."/>
            <person name="Zembek L."/>
            <person name="Zimmer A."/>
            <person name="Lander E.S."/>
        </authorList>
    </citation>
    <scope>NUCLEOTIDE SEQUENCE [LARGE SCALE GENOMIC DNA]</scope>
    <source>
        <strain>Boxer</strain>
    </source>
</reference>
<reference key="2">
    <citation type="journal article" date="2018" name="Science">
        <title>Structural basis for coupling protein transport and N-glycosylation at the mammalian endoplasmic reticulum.</title>
        <authorList>
            <person name="Braunger K."/>
            <person name="Pfeffer S."/>
            <person name="Shrimal S."/>
            <person name="Gilmore R."/>
            <person name="Berninghausen O."/>
            <person name="Mandon E.C."/>
            <person name="Becker T."/>
            <person name="Foerster F."/>
            <person name="Beckmann R."/>
        </authorList>
    </citation>
    <scope>STRUCTURE BY ELECTRON MICROSCOPY (4.20 ANGSTROMS)</scope>
</reference>
<accession>E2RKN8</accession>
<comment type="function">
    <text evidence="1">Subunit of the oligosaccharyl transferase (OST) complex that catalyzes the initial transfer of a defined glycan (Glc(3)Man(9)GlcNAc(2) in eukaryotes) from the lipid carrier dolichol-pyrophosphate to an asparagine residue within an Asn-X-Ser/Thr consensus motif in nascent polypeptide chains, the first step in protein N-glycosylation. N-glycosylation occurs cotranslationally and the complex associates with the Sec61 complex at the channel-forming translocon complex that mediates protein translocation across the endoplasmic reticulum (ER). All subunits are required for a maximal enzyme activity.</text>
</comment>
<comment type="pathway">
    <text evidence="1">Protein modification; protein glycosylation.</text>
</comment>
<comment type="subunit">
    <text evidence="1 3">Component of the oligosaccharyltransferase (OST) complex. OST exists in two different complex forms which contain common core subunits RPN1, RPN2, OST48, OST4, DAD1 and TMEM258, either STT3A or STT3B as catalytic subunits, and form-specific accessory subunits (By similarity). STT3A complex assembly occurs through the formation of 3 subcomplexes. Subcomplex 1 contains RPN1 and TMEM258, subcomplex 2 contains the STT3A-specific subunits STT3A, DC2/OSTC, and KCP2 as well as the core subunit OST4, and subcomplex 3 contains RPN2, DAD1, and OST48. The STT3A complex can form stable complexes with the Sec61 complex or with both the Sec61 and TRAP complexes (PubMed:29519914).</text>
</comment>
<comment type="subcellular location">
    <subcellularLocation>
        <location evidence="1">Membrane</location>
        <topology evidence="3">Multi-pass membrane protein</topology>
    </subcellularLocation>
    <subcellularLocation>
        <location evidence="1">Endoplasmic reticulum</location>
    </subcellularLocation>
    <subcellularLocation>
        <location evidence="1">Cytoplasm</location>
    </subcellularLocation>
</comment>
<comment type="similarity">
    <text evidence="4">Belongs to the OST5 family.</text>
</comment>
<proteinExistence type="evidence at protein level"/>
<evidence type="ECO:0000250" key="1">
    <source>
        <dbReference type="UniProtKB" id="P61165"/>
    </source>
</evidence>
<evidence type="ECO:0000255" key="2"/>
<evidence type="ECO:0000269" key="3">
    <source>
    </source>
</evidence>
<evidence type="ECO:0000305" key="4"/>
<protein>
    <recommendedName>
        <fullName>Dolichyl-diphosphooligosaccharide--protein glycosyltransferase subunit TMEM258</fullName>
        <shortName>Oligosaccharyl transferase subunit TMEM258</shortName>
    </recommendedName>
    <alternativeName>
        <fullName evidence="1">Transmembrane protein 258</fullName>
    </alternativeName>
</protein>
<name>TM258_CANLF</name>
<organism>
    <name type="scientific">Canis lupus familiaris</name>
    <name type="common">Dog</name>
    <name type="synonym">Canis familiaris</name>
    <dbReference type="NCBI Taxonomy" id="9615"/>
    <lineage>
        <taxon>Eukaryota</taxon>
        <taxon>Metazoa</taxon>
        <taxon>Chordata</taxon>
        <taxon>Craniata</taxon>
        <taxon>Vertebrata</taxon>
        <taxon>Euteleostomi</taxon>
        <taxon>Mammalia</taxon>
        <taxon>Eutheria</taxon>
        <taxon>Laurasiatheria</taxon>
        <taxon>Carnivora</taxon>
        <taxon>Caniformia</taxon>
        <taxon>Canidae</taxon>
        <taxon>Canis</taxon>
    </lineage>
</organism>
<dbReference type="EMBL" id="AAEX03004880">
    <property type="status" value="NOT_ANNOTATED_CDS"/>
    <property type="molecule type" value="Genomic_DNA"/>
</dbReference>
<dbReference type="PDB" id="6FTG">
    <property type="method" value="EM"/>
    <property type="resolution" value="9.10 A"/>
    <property type="chains" value="2=-"/>
</dbReference>
<dbReference type="PDB" id="6FTI">
    <property type="method" value="EM"/>
    <property type="resolution" value="4.20 A"/>
    <property type="chains" value="2=-"/>
</dbReference>
<dbReference type="PDB" id="6FTJ">
    <property type="method" value="EM"/>
    <property type="resolution" value="4.70 A"/>
    <property type="chains" value="2=-"/>
</dbReference>
<dbReference type="PDBsum" id="6FTG"/>
<dbReference type="PDBsum" id="6FTI"/>
<dbReference type="PDBsum" id="6FTJ"/>
<dbReference type="EMDB" id="EMD-4315"/>
<dbReference type="EMDB" id="EMD-4316"/>
<dbReference type="EMDB" id="EMD-4317"/>
<dbReference type="SMR" id="E2RKN8"/>
<dbReference type="FunCoup" id="E2RKN8">
    <property type="interactions" value="385"/>
</dbReference>
<dbReference type="STRING" id="9615.ENSCAFP00000030163"/>
<dbReference type="PaxDb" id="9612-ENSCAFP00000030163"/>
<dbReference type="Ensembl" id="ENSCAFT00000032391.2">
    <property type="protein sequence ID" value="ENSCAFP00000030163.1"/>
    <property type="gene ID" value="ENSCAFG00000050479.1"/>
</dbReference>
<dbReference type="Ensembl" id="ENSCAFT00030019682.1">
    <property type="protein sequence ID" value="ENSCAFP00030017164.1"/>
    <property type="gene ID" value="ENSCAFG00030010668.1"/>
</dbReference>
<dbReference type="eggNOG" id="KOG4452">
    <property type="taxonomic scope" value="Eukaryota"/>
</dbReference>
<dbReference type="HOGENOM" id="CLU_180449_0_0_1"/>
<dbReference type="InParanoid" id="E2RKN8"/>
<dbReference type="OMA" id="MERYVGP"/>
<dbReference type="OrthoDB" id="18408at2759"/>
<dbReference type="TreeFam" id="TF300295"/>
<dbReference type="UniPathway" id="UPA00378"/>
<dbReference type="Proteomes" id="UP000002254">
    <property type="component" value="Chromosome 6"/>
</dbReference>
<dbReference type="Proteomes" id="UP000694429">
    <property type="component" value="Chromosome 6"/>
</dbReference>
<dbReference type="Proteomes" id="UP000694542">
    <property type="component" value="Unplaced"/>
</dbReference>
<dbReference type="Proteomes" id="UP000805418">
    <property type="component" value="Unplaced"/>
</dbReference>
<dbReference type="Bgee" id="ENSCAFG00000029055">
    <property type="expression patterns" value="Expressed in smooth muscle tissue and 7 other cell types or tissues"/>
</dbReference>
<dbReference type="GO" id="GO:0005737">
    <property type="term" value="C:cytoplasm"/>
    <property type="evidence" value="ECO:0000250"/>
    <property type="project" value="UniProtKB"/>
</dbReference>
<dbReference type="GO" id="GO:0005789">
    <property type="term" value="C:endoplasmic reticulum membrane"/>
    <property type="evidence" value="ECO:0000318"/>
    <property type="project" value="GO_Central"/>
</dbReference>
<dbReference type="GO" id="GO:0016020">
    <property type="term" value="C:membrane"/>
    <property type="evidence" value="ECO:0000250"/>
    <property type="project" value="UniProtKB"/>
</dbReference>
<dbReference type="GO" id="GO:0008250">
    <property type="term" value="C:oligosaccharyltransferase complex"/>
    <property type="evidence" value="ECO:0007669"/>
    <property type="project" value="InterPro"/>
</dbReference>
<dbReference type="GO" id="GO:0062062">
    <property type="term" value="F:oligosaccharyltransferase complex binding"/>
    <property type="evidence" value="ECO:0000318"/>
    <property type="project" value="GO_Central"/>
</dbReference>
<dbReference type="GO" id="GO:0006486">
    <property type="term" value="P:protein glycosylation"/>
    <property type="evidence" value="ECO:0007669"/>
    <property type="project" value="UniProtKB-UniPathway"/>
</dbReference>
<dbReference type="GO" id="GO:0034976">
    <property type="term" value="P:response to endoplasmic reticulum stress"/>
    <property type="evidence" value="ECO:0000318"/>
    <property type="project" value="GO_Central"/>
</dbReference>
<dbReference type="InterPro" id="IPR007915">
    <property type="entry name" value="TMEM258/Ost5"/>
</dbReference>
<dbReference type="PANTHER" id="PTHR13636">
    <property type="entry name" value="TRANSMEMBRANE PROTEIN 258"/>
    <property type="match status" value="1"/>
</dbReference>
<dbReference type="Pfam" id="PF05251">
    <property type="entry name" value="Ost5"/>
    <property type="match status" value="1"/>
</dbReference>
<feature type="chain" id="PRO_0000445978" description="Dolichyl-diphosphooligosaccharide--protein glycosyltransferase subunit TMEM258">
    <location>
        <begin position="1"/>
        <end position="79"/>
    </location>
</feature>
<feature type="topological domain" description="Lumenal" evidence="4">
    <location>
        <begin position="1"/>
        <end position="16"/>
    </location>
</feature>
<feature type="transmembrane region" description="Helical" evidence="2">
    <location>
        <begin position="17"/>
        <end position="37"/>
    </location>
</feature>
<feature type="topological domain" description="Cytoplasmic" evidence="4">
    <location>
        <begin position="38"/>
        <end position="54"/>
    </location>
</feature>
<feature type="transmembrane region" description="Helical" evidence="2">
    <location>
        <begin position="55"/>
        <end position="75"/>
    </location>
</feature>
<feature type="topological domain" description="Lumenal" evidence="4">
    <location>
        <begin position="76"/>
        <end position="79"/>
    </location>
</feature>
<feature type="modified residue" description="N-acetylmethionine" evidence="1">
    <location>
        <position position="1"/>
    </location>
</feature>
<sequence>MELEAMSRYTSPVNPAVFPHLTVVLLAIGMFFTAWFFVYEVTSTKYTRDICKELLISLVASLFMGFGVLFLLLWVGIYV</sequence>